<keyword id="KW-0106">Calcium</keyword>
<keyword id="KW-0903">Direct protein sequencing</keyword>
<keyword id="KW-1015">Disulfide bond</keyword>
<keyword id="KW-0422">Lactose biosynthesis</keyword>
<keyword id="KW-0479">Metal-binding</keyword>
<keyword id="KW-0494">Milk protein</keyword>
<keyword id="KW-1185">Reference proteome</keyword>
<keyword id="KW-0964">Secreted</keyword>
<proteinExistence type="evidence at protein level"/>
<name>LALB2_HORSE</name>
<organism>
    <name type="scientific">Equus caballus</name>
    <name type="common">Horse</name>
    <dbReference type="NCBI Taxonomy" id="9796"/>
    <lineage>
        <taxon>Eukaryota</taxon>
        <taxon>Metazoa</taxon>
        <taxon>Chordata</taxon>
        <taxon>Craniata</taxon>
        <taxon>Vertebrata</taxon>
        <taxon>Euteleostomi</taxon>
        <taxon>Mammalia</taxon>
        <taxon>Eutheria</taxon>
        <taxon>Laurasiatheria</taxon>
        <taxon>Perissodactyla</taxon>
        <taxon>Equidae</taxon>
        <taxon>Equus</taxon>
    </lineage>
</organism>
<reference key="1">
    <citation type="journal article" date="1987" name="Biol. Chem. Hoppe-Seyler">
        <title>Identification and the primary structure of equine alpha-lactalbumin B and C (Equus caballus, Perissodactyla).</title>
        <authorList>
            <person name="Godovac-Zimmermann J."/>
            <person name="Shaw D."/>
            <person name="Conti A."/>
            <person name="McKenzie H.A."/>
        </authorList>
    </citation>
    <scope>PROTEIN SEQUENCE</scope>
</reference>
<protein>
    <recommendedName>
        <fullName>Alpha-lactalbumin B/C</fullName>
    </recommendedName>
    <alternativeName>
        <fullName>Lactose synthase B protein</fullName>
    </alternativeName>
</protein>
<dbReference type="PIR" id="A26541">
    <property type="entry name" value="A26541"/>
</dbReference>
<dbReference type="SMR" id="P08896"/>
<dbReference type="FunCoup" id="P08896">
    <property type="interactions" value="77"/>
</dbReference>
<dbReference type="Allergome" id="1498">
    <property type="allergen name" value="Equ c ALA"/>
</dbReference>
<dbReference type="PeptideAtlas" id="P08896"/>
<dbReference type="InParanoid" id="P08896"/>
<dbReference type="Proteomes" id="UP000002281">
    <property type="component" value="Unplaced"/>
</dbReference>
<dbReference type="GO" id="GO:0005576">
    <property type="term" value="C:extracellular region"/>
    <property type="evidence" value="ECO:0007669"/>
    <property type="project" value="UniProtKB-SubCell"/>
</dbReference>
<dbReference type="GO" id="GO:0005509">
    <property type="term" value="F:calcium ion binding"/>
    <property type="evidence" value="ECO:0007669"/>
    <property type="project" value="InterPro"/>
</dbReference>
<dbReference type="GO" id="GO:0004461">
    <property type="term" value="F:lactose synthase activity"/>
    <property type="evidence" value="ECO:0007669"/>
    <property type="project" value="InterPro"/>
</dbReference>
<dbReference type="GO" id="GO:0003796">
    <property type="term" value="F:lysozyme activity"/>
    <property type="evidence" value="ECO:0000318"/>
    <property type="project" value="GO_Central"/>
</dbReference>
<dbReference type="GO" id="GO:0050829">
    <property type="term" value="P:defense response to Gram-negative bacterium"/>
    <property type="evidence" value="ECO:0000318"/>
    <property type="project" value="GO_Central"/>
</dbReference>
<dbReference type="GO" id="GO:0050830">
    <property type="term" value="P:defense response to Gram-positive bacterium"/>
    <property type="evidence" value="ECO:0000318"/>
    <property type="project" value="GO_Central"/>
</dbReference>
<dbReference type="GO" id="GO:0005989">
    <property type="term" value="P:lactose biosynthetic process"/>
    <property type="evidence" value="ECO:0007669"/>
    <property type="project" value="UniProtKB-KW"/>
</dbReference>
<dbReference type="CDD" id="cd16898">
    <property type="entry name" value="LYZ_LA"/>
    <property type="match status" value="1"/>
</dbReference>
<dbReference type="FunFam" id="1.10.530.10:FF:000014">
    <property type="entry name" value="Alpha-lactalbumin"/>
    <property type="match status" value="1"/>
</dbReference>
<dbReference type="Gene3D" id="1.10.530.10">
    <property type="match status" value="1"/>
</dbReference>
<dbReference type="InterPro" id="IPR001916">
    <property type="entry name" value="Glyco_hydro_22"/>
</dbReference>
<dbReference type="InterPro" id="IPR019799">
    <property type="entry name" value="Glyco_hydro_22_CS"/>
</dbReference>
<dbReference type="InterPro" id="IPR000545">
    <property type="entry name" value="Lactalbumin"/>
</dbReference>
<dbReference type="InterPro" id="IPR023346">
    <property type="entry name" value="Lysozyme-like_dom_sf"/>
</dbReference>
<dbReference type="PANTHER" id="PTHR11407:SF32">
    <property type="entry name" value="ALPHA-LACTALBUMIN"/>
    <property type="match status" value="1"/>
</dbReference>
<dbReference type="PANTHER" id="PTHR11407">
    <property type="entry name" value="LYSOZYME C"/>
    <property type="match status" value="1"/>
</dbReference>
<dbReference type="Pfam" id="PF00062">
    <property type="entry name" value="Lys"/>
    <property type="match status" value="1"/>
</dbReference>
<dbReference type="PRINTS" id="PR00136">
    <property type="entry name" value="LACTALBUMIN"/>
</dbReference>
<dbReference type="PRINTS" id="PR00135">
    <property type="entry name" value="LYZLACT"/>
</dbReference>
<dbReference type="SMART" id="SM00263">
    <property type="entry name" value="LYZ1"/>
    <property type="match status" value="1"/>
</dbReference>
<dbReference type="SUPFAM" id="SSF53955">
    <property type="entry name" value="Lysozyme-like"/>
    <property type="match status" value="1"/>
</dbReference>
<dbReference type="PROSITE" id="PS00128">
    <property type="entry name" value="GLYCOSYL_HYDROL_F22_1"/>
    <property type="match status" value="1"/>
</dbReference>
<dbReference type="PROSITE" id="PS51348">
    <property type="entry name" value="GLYCOSYL_HYDROL_F22_2"/>
    <property type="match status" value="1"/>
</dbReference>
<sequence>KQFTKCQLSQVLKSMDGYKGVTLPEWICTIFHNSGYDTQTIVKNNGKTEYGLFEINNKMWCRDNQILPSRNICGISCNKFLDDDLTDDVMCAKKDLDSEGIDYWLAHKPLCSEKLEQWLCEEL</sequence>
<accession>P08896</accession>
<comment type="function">
    <text>Regulatory subunit of lactose synthase, changes the substrate specificity of galactosyltransferase in the mammary gland making glucose a good acceptor substrate for this enzyme. This enables LS to synthesize lactose, the major carbohydrate component of milk. In other tissues, galactosyltransferase transfers galactose onto the N-acetylglucosamine of the oligosaccharide chains in glycoproteins.</text>
</comment>
<comment type="subunit">
    <text>Lactose synthase (LS) is a heterodimer of a catalytic component, beta1,4-galactosyltransferase (beta4Gal-T1) and a regulatory component, alpha-lactalbumin (LA).</text>
</comment>
<comment type="subcellular location">
    <subcellularLocation>
        <location>Secreted</location>
    </subcellularLocation>
</comment>
<comment type="tissue specificity">
    <text>Mammary gland specific. Secreted in milk.</text>
</comment>
<comment type="similarity">
    <text evidence="2">Belongs to the glycosyl hydrolase 22 family.</text>
</comment>
<feature type="chain" id="PRO_0000208837" description="Alpha-lactalbumin B/C">
    <location>
        <begin position="1"/>
        <end position="123"/>
    </location>
</feature>
<feature type="domain" description="C-type lysozyme" evidence="2">
    <location>
        <begin position="1"/>
        <end position="123"/>
    </location>
</feature>
<feature type="binding site" evidence="1">
    <location>
        <position position="79"/>
    </location>
    <ligand>
        <name>Ca(2+)</name>
        <dbReference type="ChEBI" id="CHEBI:29108"/>
    </ligand>
</feature>
<feature type="binding site" evidence="1">
    <location>
        <position position="82"/>
    </location>
    <ligand>
        <name>Ca(2+)</name>
        <dbReference type="ChEBI" id="CHEBI:29108"/>
    </ligand>
</feature>
<feature type="binding site" evidence="1">
    <location>
        <position position="84"/>
    </location>
    <ligand>
        <name>Ca(2+)</name>
        <dbReference type="ChEBI" id="CHEBI:29108"/>
    </ligand>
</feature>
<feature type="binding site" evidence="1">
    <location>
        <position position="87"/>
    </location>
    <ligand>
        <name>Ca(2+)</name>
        <dbReference type="ChEBI" id="CHEBI:29108"/>
    </ligand>
</feature>
<feature type="binding site" evidence="1">
    <location>
        <position position="88"/>
    </location>
    <ligand>
        <name>Ca(2+)</name>
        <dbReference type="ChEBI" id="CHEBI:29108"/>
    </ligand>
</feature>
<feature type="disulfide bond" evidence="2">
    <location>
        <begin position="6"/>
        <end position="120"/>
    </location>
</feature>
<feature type="disulfide bond" evidence="2">
    <location>
        <begin position="28"/>
        <end position="111"/>
    </location>
</feature>
<feature type="disulfide bond" evidence="2">
    <location>
        <begin position="61"/>
        <end position="77"/>
    </location>
</feature>
<feature type="disulfide bond" evidence="2">
    <location>
        <begin position="73"/>
        <end position="91"/>
    </location>
</feature>
<feature type="sequence variant" description="In component C.">
    <original>D</original>
    <variation>I</variation>
    <location>
        <position position="95"/>
    </location>
</feature>
<evidence type="ECO:0000250" key="1">
    <source>
        <dbReference type="UniProtKB" id="P00711"/>
    </source>
</evidence>
<evidence type="ECO:0000255" key="2">
    <source>
        <dbReference type="PROSITE-ProRule" id="PRU00680"/>
    </source>
</evidence>